<protein>
    <recommendedName>
        <fullName>Protein TonB</fullName>
    </recommendedName>
</protein>
<feature type="chain" id="PRO_0000196209" description="Protein TonB">
    <location>
        <begin position="1"/>
        <end position="242"/>
    </location>
</feature>
<feature type="transmembrane region" description="Helical; Signal-anchor" evidence="1">
    <location>
        <begin position="1"/>
        <end position="32"/>
    </location>
</feature>
<feature type="topological domain" description="Periplasmic" evidence="1">
    <location>
        <begin position="33"/>
        <end position="242"/>
    </location>
</feature>
<feature type="repeat" description="1-1">
    <location>
        <begin position="70"/>
        <end position="71"/>
    </location>
</feature>
<feature type="repeat" description="1-2">
    <location>
        <begin position="72"/>
        <end position="73"/>
    </location>
</feature>
<feature type="repeat" description="1-3">
    <location>
        <begin position="74"/>
        <end position="75"/>
    </location>
</feature>
<feature type="repeat" description="1-4">
    <location>
        <begin position="76"/>
        <end position="77"/>
    </location>
</feature>
<feature type="repeat" description="1-5">
    <location>
        <begin position="78"/>
        <end position="79"/>
    </location>
</feature>
<feature type="repeat" description="1-6; approximate">
    <location>
        <begin position="80"/>
        <end position="81"/>
    </location>
</feature>
<feature type="repeat" description="1-7">
    <location>
        <begin position="82"/>
        <end position="83"/>
    </location>
</feature>
<feature type="repeat" description="2-1">
    <location>
        <begin position="93"/>
        <end position="94"/>
    </location>
</feature>
<feature type="repeat" description="2-2">
    <location>
        <begin position="95"/>
        <end position="96"/>
    </location>
</feature>
<feature type="repeat" description="2-3">
    <location>
        <begin position="97"/>
        <end position="98"/>
    </location>
</feature>
<feature type="repeat" description="2-4">
    <location>
        <begin position="99"/>
        <end position="100"/>
    </location>
</feature>
<feature type="repeat" description="2-5">
    <location>
        <begin position="101"/>
        <end position="102"/>
    </location>
</feature>
<feature type="repeat" description="2-6">
    <location>
        <begin position="103"/>
        <end position="104"/>
    </location>
</feature>
<feature type="repeat" description="2-7">
    <location>
        <begin position="105"/>
        <end position="106"/>
    </location>
</feature>
<feature type="domain" description="TonB C-terminal" evidence="2">
    <location>
        <begin position="151"/>
        <end position="242"/>
    </location>
</feature>
<feature type="region of interest" description="Disordered" evidence="3">
    <location>
        <begin position="55"/>
        <end position="166"/>
    </location>
</feature>
<feature type="region of interest" description="7 X 2 AA approximate tandem repeats of E-P">
    <location>
        <begin position="70"/>
        <end position="83"/>
    </location>
</feature>
<feature type="region of interest" description="7 X 2 AA approximate tandem repeats of K-P">
    <location>
        <begin position="93"/>
        <end position="106"/>
    </location>
</feature>
<feature type="compositionally biased region" description="Acidic residues" evidence="3">
    <location>
        <begin position="69"/>
        <end position="79"/>
    </location>
</feature>
<feature type="compositionally biased region" description="Basic residues" evidence="3">
    <location>
        <begin position="96"/>
        <end position="107"/>
    </location>
</feature>
<feature type="compositionally biased region" description="Basic and acidic residues" evidence="3">
    <location>
        <begin position="108"/>
        <end position="119"/>
    </location>
</feature>
<feature type="compositionally biased region" description="Low complexity" evidence="3">
    <location>
        <begin position="132"/>
        <end position="153"/>
    </location>
</feature>
<comment type="function">
    <text>Interacts with outer membrane receptor proteins that carry out high-affinity binding and energy dependent uptake into the periplasmic space of specific substrates such as cobalamin, and various iron compounds (such as iron dicitrate, enterochelin, aerobactin, etc.). In the absence of TonB these receptors bind their substrates but do not carry out active transport. TonB also interacts with some colicins and is involved in the energy-dependent, irreversible steps of bacteriophages phi 80 and T1 infection. It could act to transduce energy from the cytoplasmic membrane to specific energy-requiring processes in the outer membrane, resulting in the release into the periplasm of ligands bound by these outer membrane proteins.</text>
</comment>
<comment type="subunit">
    <text evidence="1">Homodimer. Forms a complex with the accessory proteins ExbB and ExbD (By similarity).</text>
</comment>
<comment type="subcellular location">
    <subcellularLocation>
        <location>Cell inner membrane</location>
        <topology>Single-pass membrane protein</topology>
        <orientation>Periplasmic side</orientation>
    </subcellularLocation>
</comment>
<comment type="similarity">
    <text evidence="4">Belongs to the TonB family.</text>
</comment>
<organism>
    <name type="scientific">Salmonella typhimurium (strain LT2 / SGSC1412 / ATCC 700720)</name>
    <dbReference type="NCBI Taxonomy" id="99287"/>
    <lineage>
        <taxon>Bacteria</taxon>
        <taxon>Pseudomonadati</taxon>
        <taxon>Pseudomonadota</taxon>
        <taxon>Gammaproteobacteria</taxon>
        <taxon>Enterobacterales</taxon>
        <taxon>Enterobacteriaceae</taxon>
        <taxon>Salmonella</taxon>
    </lineage>
</organism>
<sequence>MTLDLPRRFPWPTLLSVGIHGAVVAGLLYTSVHQVIELPAPAQPITVTMVSPADLEPPQAVQPPPEPVVEPEPEPEPEPIPEPPKEAPVVIEKPKPKPKPKPKPKPVKKVEEQPKREVKPAAPRPASPFENSAPVRPTSSTASATSKPAVSVPTGPRALSRNQPQYPARAQALRIEGRVKVKFDVTSAGRVENVQILSAQPANMFEREVKNAMRKWRYEAGKPGSGLVVNIIFRLNGTAQIE</sequence>
<proteinExistence type="evidence at protein level"/>
<reference key="1">
    <citation type="journal article" date="1990" name="J. Mol. Biol.">
        <title>TonB protein of Salmonella typhimurium. A model for signal transduction between membranes.</title>
        <authorList>
            <person name="Hannavy K."/>
            <person name="Barr G.C."/>
            <person name="Dorman C.J."/>
            <person name="Adamson J."/>
            <person name="Mazengera L.R."/>
            <person name="Gallagher M.P."/>
            <person name="Evans J.S."/>
            <person name="Levine B.A."/>
            <person name="Trayer I.P."/>
            <person name="Higgins C.F."/>
        </authorList>
    </citation>
    <scope>NUCLEOTIDE SEQUENCE [GENOMIC DNA]</scope>
</reference>
<reference key="2">
    <citation type="journal article" date="1993" name="Mol. Microbiol.">
        <title>A sequence-specific function for the N-terminal signal-like sequence of the TonB protein.</title>
        <authorList>
            <person name="Karlsson M."/>
            <person name="Hannavy K."/>
            <person name="Higgins C.F."/>
        </authorList>
    </citation>
    <scope>SEQUENCE REVISION TO 42; 58-60 AND 168</scope>
</reference>
<reference key="3">
    <citation type="journal article" date="2001" name="Nature">
        <title>Complete genome sequence of Salmonella enterica serovar Typhimurium LT2.</title>
        <authorList>
            <person name="McClelland M."/>
            <person name="Sanderson K.E."/>
            <person name="Spieth J."/>
            <person name="Clifton S.W."/>
            <person name="Latreille P."/>
            <person name="Courtney L."/>
            <person name="Porwollik S."/>
            <person name="Ali J."/>
            <person name="Dante M."/>
            <person name="Du F."/>
            <person name="Hou S."/>
            <person name="Layman D."/>
            <person name="Leonard S."/>
            <person name="Nguyen C."/>
            <person name="Scott K."/>
            <person name="Holmes A."/>
            <person name="Grewal N."/>
            <person name="Mulvaney E."/>
            <person name="Ryan E."/>
            <person name="Sun H."/>
            <person name="Florea L."/>
            <person name="Miller W."/>
            <person name="Stoneking T."/>
            <person name="Nhan M."/>
            <person name="Waterston R."/>
            <person name="Wilson R.K."/>
        </authorList>
    </citation>
    <scope>NUCLEOTIDE SEQUENCE [LARGE SCALE GENOMIC DNA]</scope>
    <source>
        <strain>LT2 / SGSC1412 / ATCC 700720</strain>
    </source>
</reference>
<keyword id="KW-0002">3D-structure</keyword>
<keyword id="KW-0080">Bacteriocin transport</keyword>
<keyword id="KW-0997">Cell inner membrane</keyword>
<keyword id="KW-1003">Cell membrane</keyword>
<keyword id="KW-0472">Membrane</keyword>
<keyword id="KW-0653">Protein transport</keyword>
<keyword id="KW-1185">Reference proteome</keyword>
<keyword id="KW-0677">Repeat</keyword>
<keyword id="KW-0735">Signal-anchor</keyword>
<keyword id="KW-0812">Transmembrane</keyword>
<keyword id="KW-1133">Transmembrane helix</keyword>
<keyword id="KW-0813">Transport</keyword>
<evidence type="ECO:0000250" key="1"/>
<evidence type="ECO:0000255" key="2">
    <source>
        <dbReference type="PROSITE-ProRule" id="PRU01359"/>
    </source>
</evidence>
<evidence type="ECO:0000256" key="3">
    <source>
        <dbReference type="SAM" id="MobiDB-lite"/>
    </source>
</evidence>
<evidence type="ECO:0000305" key="4"/>
<dbReference type="EMBL" id="X56434">
    <property type="protein sequence ID" value="CAA39818.1"/>
    <property type="molecule type" value="Genomic_DNA"/>
</dbReference>
<dbReference type="EMBL" id="AE006468">
    <property type="protein sequence ID" value="AAL20655.1"/>
    <property type="molecule type" value="Genomic_DNA"/>
</dbReference>
<dbReference type="PIR" id="S13257">
    <property type="entry name" value="S13257"/>
</dbReference>
<dbReference type="RefSeq" id="NP_460696.1">
    <property type="nucleotide sequence ID" value="NC_003197.2"/>
</dbReference>
<dbReference type="RefSeq" id="WP_001520573.1">
    <property type="nucleotide sequence ID" value="NC_003197.2"/>
</dbReference>
<dbReference type="PDB" id="8RD6">
    <property type="method" value="NMR"/>
    <property type="chains" value="A=154-242"/>
</dbReference>
<dbReference type="PDBsum" id="8RD6"/>
<dbReference type="BMRB" id="P25945"/>
<dbReference type="SMR" id="P25945"/>
<dbReference type="STRING" id="99287.STM1737"/>
<dbReference type="PaxDb" id="99287-STM1737"/>
<dbReference type="GeneID" id="1253256"/>
<dbReference type="KEGG" id="stm:STM1737"/>
<dbReference type="PATRIC" id="fig|99287.12.peg.1833"/>
<dbReference type="HOGENOM" id="CLU_098618_0_0_6"/>
<dbReference type="PhylomeDB" id="P25945"/>
<dbReference type="BioCyc" id="SENT99287:STM1737-MONOMER"/>
<dbReference type="Proteomes" id="UP000001014">
    <property type="component" value="Chromosome"/>
</dbReference>
<dbReference type="GO" id="GO:0030288">
    <property type="term" value="C:outer membrane-bounded periplasmic space"/>
    <property type="evidence" value="ECO:0007669"/>
    <property type="project" value="InterPro"/>
</dbReference>
<dbReference type="GO" id="GO:0098797">
    <property type="term" value="C:plasma membrane protein complex"/>
    <property type="evidence" value="ECO:0000318"/>
    <property type="project" value="GO_Central"/>
</dbReference>
<dbReference type="GO" id="GO:0031992">
    <property type="term" value="F:energy transducer activity"/>
    <property type="evidence" value="ECO:0000318"/>
    <property type="project" value="GO_Central"/>
</dbReference>
<dbReference type="GO" id="GO:0043213">
    <property type="term" value="P:bacteriocin transport"/>
    <property type="evidence" value="ECO:0007669"/>
    <property type="project" value="UniProtKB-KW"/>
</dbReference>
<dbReference type="GO" id="GO:0015031">
    <property type="term" value="P:protein transport"/>
    <property type="evidence" value="ECO:0007669"/>
    <property type="project" value="UniProtKB-KW"/>
</dbReference>
<dbReference type="GO" id="GO:0015891">
    <property type="term" value="P:siderophore transport"/>
    <property type="evidence" value="ECO:0007669"/>
    <property type="project" value="InterPro"/>
</dbReference>
<dbReference type="GO" id="GO:0055085">
    <property type="term" value="P:transmembrane transport"/>
    <property type="evidence" value="ECO:0007669"/>
    <property type="project" value="InterPro"/>
</dbReference>
<dbReference type="Gene3D" id="3.30.2420.10">
    <property type="entry name" value="TonB"/>
    <property type="match status" value="1"/>
</dbReference>
<dbReference type="InterPro" id="IPR003538">
    <property type="entry name" value="TonB"/>
</dbReference>
<dbReference type="InterPro" id="IPR051045">
    <property type="entry name" value="TonB-dependent_transducer"/>
</dbReference>
<dbReference type="InterPro" id="IPR006260">
    <property type="entry name" value="TonB/TolA_C"/>
</dbReference>
<dbReference type="InterPro" id="IPR037682">
    <property type="entry name" value="TonB_C"/>
</dbReference>
<dbReference type="InterPro" id="IPR049924">
    <property type="entry name" value="TonB_pro-rich"/>
</dbReference>
<dbReference type="NCBIfam" id="NF008081">
    <property type="entry name" value="PRK10819.1-2"/>
    <property type="match status" value="1"/>
</dbReference>
<dbReference type="NCBIfam" id="NF008083">
    <property type="entry name" value="PRK10819.1-4"/>
    <property type="match status" value="1"/>
</dbReference>
<dbReference type="NCBIfam" id="TIGR01352">
    <property type="entry name" value="tonB_Cterm"/>
    <property type="match status" value="1"/>
</dbReference>
<dbReference type="PANTHER" id="PTHR33446:SF8">
    <property type="entry name" value="PROTEIN TONB"/>
    <property type="match status" value="1"/>
</dbReference>
<dbReference type="PANTHER" id="PTHR33446">
    <property type="entry name" value="PROTEIN TONB-RELATED"/>
    <property type="match status" value="1"/>
</dbReference>
<dbReference type="Pfam" id="PF03544">
    <property type="entry name" value="TonB_C"/>
    <property type="match status" value="1"/>
</dbReference>
<dbReference type="Pfam" id="PF16031">
    <property type="entry name" value="TonB_N"/>
    <property type="match status" value="1"/>
</dbReference>
<dbReference type="PRINTS" id="PR01374">
    <property type="entry name" value="TONBPROTEIN"/>
</dbReference>
<dbReference type="SUPFAM" id="SSF74653">
    <property type="entry name" value="TolA/TonB C-terminal domain"/>
    <property type="match status" value="1"/>
</dbReference>
<dbReference type="PROSITE" id="PS52015">
    <property type="entry name" value="TONB_CTD"/>
    <property type="match status" value="1"/>
</dbReference>
<accession>P25945</accession>
<name>TONB_SALTY</name>
<gene>
    <name type="primary">tonB</name>
    <name type="ordered locus">STM1737</name>
</gene>